<dbReference type="EMBL" id="GG704913">
    <property type="protein sequence ID" value="EAS28718.3"/>
    <property type="status" value="ALT_INIT"/>
    <property type="molecule type" value="Genomic_DNA"/>
</dbReference>
<dbReference type="RefSeq" id="XP_001240301.1">
    <property type="nucleotide sequence ID" value="XM_001240300.2"/>
</dbReference>
<dbReference type="STRING" id="246410.Q1DQE9"/>
<dbReference type="GeneID" id="4559399"/>
<dbReference type="KEGG" id="cim:CIMG_07464"/>
<dbReference type="InParanoid" id="Q1DQE9"/>
<dbReference type="OrthoDB" id="29523at2759"/>
<dbReference type="Proteomes" id="UP000001261">
    <property type="component" value="Unassembled WGS sequence"/>
</dbReference>
<dbReference type="GO" id="GO:0005730">
    <property type="term" value="C:nucleolus"/>
    <property type="evidence" value="ECO:0007669"/>
    <property type="project" value="UniProtKB-SubCell"/>
</dbReference>
<dbReference type="GO" id="GO:0003676">
    <property type="term" value="F:nucleic acid binding"/>
    <property type="evidence" value="ECO:0007669"/>
    <property type="project" value="InterPro"/>
</dbReference>
<dbReference type="GO" id="GO:0006364">
    <property type="term" value="P:rRNA processing"/>
    <property type="evidence" value="ECO:0007669"/>
    <property type="project" value="UniProtKB-KW"/>
</dbReference>
<dbReference type="InterPro" id="IPR000467">
    <property type="entry name" value="G_patch_dom"/>
</dbReference>
<dbReference type="InterPro" id="IPR050656">
    <property type="entry name" value="PINX1"/>
</dbReference>
<dbReference type="PANTHER" id="PTHR23149">
    <property type="entry name" value="G PATCH DOMAIN CONTAINING PROTEIN"/>
    <property type="match status" value="1"/>
</dbReference>
<dbReference type="PANTHER" id="PTHR23149:SF31">
    <property type="entry name" value="PROTEIN PXR1"/>
    <property type="match status" value="1"/>
</dbReference>
<dbReference type="PROSITE" id="PS50174">
    <property type="entry name" value="G_PATCH"/>
    <property type="match status" value="1"/>
</dbReference>
<proteinExistence type="inferred from homology"/>
<feature type="chain" id="PRO_0000324887" description="Protein PXR1">
    <location>
        <begin position="1"/>
        <end position="317"/>
    </location>
</feature>
<feature type="domain" description="G-patch" evidence="2">
    <location>
        <begin position="25"/>
        <end position="79"/>
    </location>
</feature>
<feature type="region of interest" description="Disordered" evidence="3">
    <location>
        <begin position="152"/>
        <end position="268"/>
    </location>
</feature>
<feature type="compositionally biased region" description="Basic and acidic residues" evidence="3">
    <location>
        <begin position="154"/>
        <end position="170"/>
    </location>
</feature>
<feature type="compositionally biased region" description="Basic residues" evidence="3">
    <location>
        <begin position="171"/>
        <end position="182"/>
    </location>
</feature>
<feature type="compositionally biased region" description="Polar residues" evidence="3">
    <location>
        <begin position="192"/>
        <end position="219"/>
    </location>
</feature>
<feature type="compositionally biased region" description="Basic residues" evidence="3">
    <location>
        <begin position="224"/>
        <end position="236"/>
    </location>
</feature>
<protein>
    <recommendedName>
        <fullName>Protein PXR1</fullName>
    </recommendedName>
    <alternativeName>
        <fullName>PinX1-related protein 1</fullName>
    </alternativeName>
</protein>
<sequence>MGLAGPKKRTKISHDPNNIAWSRSTTGYGHRIMSAQGWTPGAFLGAPGAAHSSCYTAASASHIRVVLKDDTLGLGARPRNPLAEDEPTGLDAFQDLLGRLNGKSEVELVKEQRRREDIKLLSFVERRWKSMAFVPGGYLVKEDPARTLVVAEQANKDDSSDPKSRQETTQKRPKKEKRKEKSRHREEPIDSRSISSKPERGTINSANQTSDDESTNIVPSESKSRKKEKKKKSKKRKMDEVNEEESVPDGRIGCKGILPNKQSAQQSTGERYISGDSMINAREHRPLGRQVIRSRYIQQKKMALLDAKSLNEIFMTS</sequence>
<comment type="function">
    <text evidence="1">Involved in rRNA-processing at A0, A1 and A2 sites and negatively regulates telomerase.</text>
</comment>
<comment type="subcellular location">
    <subcellularLocation>
        <location evidence="1">Nucleus</location>
        <location evidence="1">Nucleolus</location>
    </subcellularLocation>
</comment>
<comment type="similarity">
    <text evidence="4">Belongs to the PINX1 family.</text>
</comment>
<comment type="sequence caution" evidence="4">
    <conflict type="erroneous initiation">
        <sequence resource="EMBL-CDS" id="EAS28718"/>
    </conflict>
    <text>Extended N-terminus.</text>
</comment>
<gene>
    <name type="primary">PXR1</name>
    <name type="ORF">CIMG_07464</name>
</gene>
<accession>Q1DQE9</accession>
<accession>J3K422</accession>
<evidence type="ECO:0000250" key="1"/>
<evidence type="ECO:0000255" key="2">
    <source>
        <dbReference type="PROSITE-ProRule" id="PRU00092"/>
    </source>
</evidence>
<evidence type="ECO:0000256" key="3">
    <source>
        <dbReference type="SAM" id="MobiDB-lite"/>
    </source>
</evidence>
<evidence type="ECO:0000305" key="4"/>
<name>PXR1_COCIM</name>
<reference key="1">
    <citation type="journal article" date="2009" name="Genome Res.">
        <title>Comparative genomic analyses of the human fungal pathogens Coccidioides and their relatives.</title>
        <authorList>
            <person name="Sharpton T.J."/>
            <person name="Stajich J.E."/>
            <person name="Rounsley S.D."/>
            <person name="Gardner M.J."/>
            <person name="Wortman J.R."/>
            <person name="Jordar V.S."/>
            <person name="Maiti R."/>
            <person name="Kodira C.D."/>
            <person name="Neafsey D.E."/>
            <person name="Zeng Q."/>
            <person name="Hung C.-Y."/>
            <person name="McMahan C."/>
            <person name="Muszewska A."/>
            <person name="Grynberg M."/>
            <person name="Mandel M.A."/>
            <person name="Kellner E.M."/>
            <person name="Barker B.M."/>
            <person name="Galgiani J.N."/>
            <person name="Orbach M.J."/>
            <person name="Kirkland T.N."/>
            <person name="Cole G.T."/>
            <person name="Henn M.R."/>
            <person name="Birren B.W."/>
            <person name="Taylor J.W."/>
        </authorList>
    </citation>
    <scope>NUCLEOTIDE SEQUENCE [LARGE SCALE GENOMIC DNA]</scope>
    <source>
        <strain>RS</strain>
    </source>
</reference>
<reference key="2">
    <citation type="journal article" date="2010" name="Genome Res.">
        <title>Population genomic sequencing of Coccidioides fungi reveals recent hybridization and transposon control.</title>
        <authorList>
            <person name="Neafsey D.E."/>
            <person name="Barker B.M."/>
            <person name="Sharpton T.J."/>
            <person name="Stajich J.E."/>
            <person name="Park D.J."/>
            <person name="Whiston E."/>
            <person name="Hung C.-Y."/>
            <person name="McMahan C."/>
            <person name="White J."/>
            <person name="Sykes S."/>
            <person name="Heiman D."/>
            <person name="Young S."/>
            <person name="Zeng Q."/>
            <person name="Abouelleil A."/>
            <person name="Aftuck L."/>
            <person name="Bessette D."/>
            <person name="Brown A."/>
            <person name="FitzGerald M."/>
            <person name="Lui A."/>
            <person name="Macdonald J.P."/>
            <person name="Priest M."/>
            <person name="Orbach M.J."/>
            <person name="Galgiani J.N."/>
            <person name="Kirkland T.N."/>
            <person name="Cole G.T."/>
            <person name="Birren B.W."/>
            <person name="Henn M.R."/>
            <person name="Taylor J.W."/>
            <person name="Rounsley S.D."/>
        </authorList>
    </citation>
    <scope>GENOME REANNOTATION</scope>
    <source>
        <strain>RS</strain>
    </source>
</reference>
<keyword id="KW-0539">Nucleus</keyword>
<keyword id="KW-1185">Reference proteome</keyword>
<keyword id="KW-0690">Ribosome biogenesis</keyword>
<keyword id="KW-0698">rRNA processing</keyword>
<organism>
    <name type="scientific">Coccidioides immitis (strain RS)</name>
    <name type="common">Valley fever fungus</name>
    <dbReference type="NCBI Taxonomy" id="246410"/>
    <lineage>
        <taxon>Eukaryota</taxon>
        <taxon>Fungi</taxon>
        <taxon>Dikarya</taxon>
        <taxon>Ascomycota</taxon>
        <taxon>Pezizomycotina</taxon>
        <taxon>Eurotiomycetes</taxon>
        <taxon>Eurotiomycetidae</taxon>
        <taxon>Onygenales</taxon>
        <taxon>Onygenaceae</taxon>
        <taxon>Coccidioides</taxon>
    </lineage>
</organism>